<gene>
    <name type="primary">YRA2</name>
    <name type="ORF">VIN13_2753</name>
</gene>
<evidence type="ECO:0000250" key="1"/>
<evidence type="ECO:0000250" key="2">
    <source>
        <dbReference type="UniProtKB" id="P36036"/>
    </source>
</evidence>
<evidence type="ECO:0000255" key="3">
    <source>
        <dbReference type="PROSITE-ProRule" id="PRU00176"/>
    </source>
</evidence>
<evidence type="ECO:0000256" key="4">
    <source>
        <dbReference type="SAM" id="MobiDB-lite"/>
    </source>
</evidence>
<evidence type="ECO:0000305" key="5"/>
<protein>
    <recommendedName>
        <fullName>RNA annealing protein YRA2</fullName>
    </recommendedName>
</protein>
<keyword id="KW-0007">Acetylation</keyword>
<keyword id="KW-0238">DNA-binding</keyword>
<keyword id="KW-0509">mRNA transport</keyword>
<keyword id="KW-0539">Nucleus</keyword>
<keyword id="KW-0694">RNA-binding</keyword>
<keyword id="KW-0813">Transport</keyword>
<dbReference type="EMBL" id="ADXC01000050">
    <property type="protein sequence ID" value="EGA78136.1"/>
    <property type="molecule type" value="Genomic_DNA"/>
</dbReference>
<dbReference type="SMR" id="E7LWL0"/>
<dbReference type="HOGENOM" id="CLU_111217_0_0_1"/>
<dbReference type="OMA" id="KQTAQEH"/>
<dbReference type="GO" id="GO:0005634">
    <property type="term" value="C:nucleus"/>
    <property type="evidence" value="ECO:0007669"/>
    <property type="project" value="UniProtKB-SubCell"/>
</dbReference>
<dbReference type="GO" id="GO:0003677">
    <property type="term" value="F:DNA binding"/>
    <property type="evidence" value="ECO:0007669"/>
    <property type="project" value="UniProtKB-KW"/>
</dbReference>
<dbReference type="GO" id="GO:0003723">
    <property type="term" value="F:RNA binding"/>
    <property type="evidence" value="ECO:0007669"/>
    <property type="project" value="UniProtKB-KW"/>
</dbReference>
<dbReference type="GO" id="GO:0051028">
    <property type="term" value="P:mRNA transport"/>
    <property type="evidence" value="ECO:0007669"/>
    <property type="project" value="UniProtKB-KW"/>
</dbReference>
<dbReference type="CDD" id="cd12295">
    <property type="entry name" value="RRM_YRA2"/>
    <property type="match status" value="1"/>
</dbReference>
<dbReference type="FunFam" id="3.30.70.330:FF:000793">
    <property type="entry name" value="RNA annealing protein YRA2"/>
    <property type="match status" value="1"/>
</dbReference>
<dbReference type="Gene3D" id="3.30.70.330">
    <property type="match status" value="1"/>
</dbReference>
<dbReference type="InterPro" id="IPR025715">
    <property type="entry name" value="FoP_C"/>
</dbReference>
<dbReference type="InterPro" id="IPR012677">
    <property type="entry name" value="Nucleotide-bd_a/b_plait_sf"/>
</dbReference>
<dbReference type="InterPro" id="IPR035979">
    <property type="entry name" value="RBD_domain_sf"/>
</dbReference>
<dbReference type="InterPro" id="IPR000504">
    <property type="entry name" value="RRM_dom"/>
</dbReference>
<dbReference type="InterPro" id="IPR034396">
    <property type="entry name" value="Yra2_RRM"/>
</dbReference>
<dbReference type="Pfam" id="PF13865">
    <property type="entry name" value="FoP_duplication"/>
    <property type="match status" value="1"/>
</dbReference>
<dbReference type="Pfam" id="PF00076">
    <property type="entry name" value="RRM_1"/>
    <property type="match status" value="1"/>
</dbReference>
<dbReference type="SMART" id="SM00360">
    <property type="entry name" value="RRM"/>
    <property type="match status" value="1"/>
</dbReference>
<dbReference type="SUPFAM" id="SSF54928">
    <property type="entry name" value="RNA-binding domain, RBD"/>
    <property type="match status" value="1"/>
</dbReference>
<dbReference type="PROSITE" id="PS50102">
    <property type="entry name" value="RRM"/>
    <property type="match status" value="1"/>
</dbReference>
<reference key="1">
    <citation type="journal article" date="2011" name="PLoS Genet.">
        <title>Whole-genome comparison reveals novel genetic elements that characterize the genome of industrial strains of Saccharomyces cerevisiae.</title>
        <authorList>
            <person name="Borneman A.R."/>
            <person name="Desany B.A."/>
            <person name="Riches D."/>
            <person name="Affourtit J.P."/>
            <person name="Forgan A.H."/>
            <person name="Pretorius I.S."/>
            <person name="Egholm M."/>
            <person name="Chambers P.J."/>
        </authorList>
    </citation>
    <scope>NUCLEOTIDE SEQUENCE [LARGE SCALE GENOMIC DNA]</scope>
    <source>
        <strain>VIN 13</strain>
    </source>
</reference>
<sequence>MDKAFDEIIGNSHTDSSSNHKVTRYRRRDLRNELGPRLGFAPSDAASRSKDRLYREREEPPLPKRIRISKIPLDVSDYTLDDMIKEFGSPIFSKIFDNKEDRTCIYEFEDPEVLEKIVERYNGHELHNAKIEVEIYQPQRKHSRMNAHNRRKQTAQEQGRGRPGSHYRQRPNRVSKKNKGREKNNTPTSVEALDAELDAYMKG</sequence>
<accession>E7LWL0</accession>
<organism>
    <name type="scientific">Saccharomyces cerevisiae (strain VIN 13)</name>
    <name type="common">Baker's yeast</name>
    <dbReference type="NCBI Taxonomy" id="764099"/>
    <lineage>
        <taxon>Eukaryota</taxon>
        <taxon>Fungi</taxon>
        <taxon>Dikarya</taxon>
        <taxon>Ascomycota</taxon>
        <taxon>Saccharomycotina</taxon>
        <taxon>Saccharomycetes</taxon>
        <taxon>Saccharomycetales</taxon>
        <taxon>Saccharomycetaceae</taxon>
        <taxon>Saccharomyces</taxon>
    </lineage>
</organism>
<proteinExistence type="inferred from homology"/>
<comment type="function">
    <text evidence="1">Involved in export of poly(A) mRNAs from the nucleus. Recruited to the coding sequences as well as poly-A sites of active genes (By similarity).</text>
</comment>
<comment type="subunit">
    <text evidence="1">Associates with mRNPs. Interacts with YRA1.</text>
</comment>
<comment type="subcellular location">
    <subcellularLocation>
        <location evidence="1">Nucleus</location>
    </subcellularLocation>
</comment>
<comment type="similarity">
    <text evidence="5">Belongs to the YRA1 family.</text>
</comment>
<name>YRA2_YEASV</name>
<feature type="chain" id="PRO_0000409549" description="RNA annealing protein YRA2">
    <location>
        <begin position="1"/>
        <end position="203"/>
    </location>
</feature>
<feature type="domain" description="RRM" evidence="3">
    <location>
        <begin position="64"/>
        <end position="138"/>
    </location>
</feature>
<feature type="region of interest" description="Disordered" evidence="4">
    <location>
        <begin position="1"/>
        <end position="60"/>
    </location>
</feature>
<feature type="region of interest" description="Disordered" evidence="4">
    <location>
        <begin position="134"/>
        <end position="203"/>
    </location>
</feature>
<feature type="compositionally biased region" description="Polar residues" evidence="4">
    <location>
        <begin position="11"/>
        <end position="20"/>
    </location>
</feature>
<feature type="compositionally biased region" description="Basic and acidic residues" evidence="4">
    <location>
        <begin position="47"/>
        <end position="60"/>
    </location>
</feature>
<feature type="compositionally biased region" description="Basic residues" evidence="4">
    <location>
        <begin position="139"/>
        <end position="153"/>
    </location>
</feature>
<feature type="compositionally biased region" description="Basic residues" evidence="4">
    <location>
        <begin position="163"/>
        <end position="180"/>
    </location>
</feature>
<feature type="modified residue" description="N-acetylmethionine" evidence="2">
    <location>
        <position position="1"/>
    </location>
</feature>